<organism>
    <name type="scientific">Picea sitchensis</name>
    <name type="common">Sitka spruce</name>
    <name type="synonym">Pinus sitchensis</name>
    <dbReference type="NCBI Taxonomy" id="3332"/>
    <lineage>
        <taxon>Eukaryota</taxon>
        <taxon>Viridiplantae</taxon>
        <taxon>Streptophyta</taxon>
        <taxon>Embryophyta</taxon>
        <taxon>Tracheophyta</taxon>
        <taxon>Spermatophyta</taxon>
        <taxon>Pinopsida</taxon>
        <taxon>Pinidae</taxon>
        <taxon>Conifers I</taxon>
        <taxon>Pinales</taxon>
        <taxon>Pinaceae</taxon>
        <taxon>Picea</taxon>
    </lineage>
</organism>
<feature type="transit peptide" description="Chloroplast" evidence="2">
    <location>
        <begin position="1"/>
        <end position="36"/>
    </location>
</feature>
<feature type="chain" id="PRO_0000418968" description="Carene synthase 2, chloroplastic">
    <location>
        <begin position="37"/>
        <end position="627"/>
    </location>
</feature>
<feature type="short sequence motif" description="DDXXD motif">
    <location>
        <begin position="378"/>
        <end position="382"/>
    </location>
</feature>
<feature type="binding site" evidence="1">
    <location>
        <position position="378"/>
    </location>
    <ligand>
        <name>Mg(2+)</name>
        <dbReference type="ChEBI" id="CHEBI:18420"/>
        <label>1</label>
    </ligand>
</feature>
<feature type="binding site" evidence="1">
    <location>
        <position position="378"/>
    </location>
    <ligand>
        <name>Mg(2+)</name>
        <dbReference type="ChEBI" id="CHEBI:18420"/>
        <label>2</label>
    </ligand>
</feature>
<feature type="binding site" evidence="1">
    <location>
        <position position="382"/>
    </location>
    <ligand>
        <name>Mg(2+)</name>
        <dbReference type="ChEBI" id="CHEBI:18420"/>
        <label>1</label>
    </ligand>
</feature>
<feature type="binding site" evidence="1">
    <location>
        <position position="382"/>
    </location>
    <ligand>
        <name>Mg(2+)</name>
        <dbReference type="ChEBI" id="CHEBI:18420"/>
        <label>2</label>
    </ligand>
</feature>
<feature type="binding site" evidence="1">
    <location>
        <position position="530"/>
    </location>
    <ligand>
        <name>Mg(2+)</name>
        <dbReference type="ChEBI" id="CHEBI:18420"/>
        <label>3</label>
    </ligand>
</feature>
<reference key="1">
    <citation type="journal article" date="2011" name="Plant J.">
        <title>An integrated genomic, proteomic and biochemical analysis of (+)-3-carene biosynthesis in Sitka spruce (Picea sitchensis) genotypes that are resistant or susceptible to white pine weevil.</title>
        <authorList>
            <person name="Hall D.E."/>
            <person name="Robert J.A."/>
            <person name="Keeling C.I."/>
            <person name="Domanski D."/>
            <person name="Quesada A.L."/>
            <person name="Jancsik S."/>
            <person name="Kuzyk M.A."/>
            <person name="Hamberger B."/>
            <person name="Borchers C.H."/>
            <person name="Bohlmann J."/>
        </authorList>
    </citation>
    <scope>NUCLEOTIDE SEQUENCE [GENOMIC DNA / MRNA]</scope>
    <scope>FUNCTION</scope>
    <scope>CATALYTIC ACTIVITY</scope>
    <scope>INDUCTION BY JASMONIC ACID</scope>
    <scope>BIOPHYSICOCHEMICAL PROPERTIES</scope>
    <source>
        <strain>cv. H898</strain>
    </source>
</reference>
<gene>
    <name type="primary">TPS-3car2</name>
</gene>
<protein>
    <recommendedName>
        <fullName>Carene synthase 2, chloroplastic</fullName>
        <shortName>PsTPS-3car2</shortName>
        <ecNumber>4.2.3.107</ecNumber>
    </recommendedName>
    <alternativeName>
        <fullName>(+)-car-3-ene synthase 2</fullName>
    </alternativeName>
    <alternativeName>
        <fullName>3-carene cyclase 2</fullName>
    </alternativeName>
</protein>
<name>3CAR2_PICSI</name>
<accession>F1CKI8</accession>
<accession>F1DI19</accession>
<dbReference type="EC" id="4.2.3.107"/>
<dbReference type="EMBL" id="HQ336800">
    <property type="protein sequence ID" value="ADU85926.1"/>
    <property type="molecule type" value="mRNA"/>
</dbReference>
<dbReference type="EMBL" id="HQ850276">
    <property type="protein sequence ID" value="ADY38568.1"/>
    <property type="molecule type" value="Genomic_DNA"/>
</dbReference>
<dbReference type="SMR" id="F1CKI8"/>
<dbReference type="KEGG" id="ag:ADU85926"/>
<dbReference type="BRENDA" id="4.2.3.107">
    <property type="organism ID" value="8974"/>
</dbReference>
<dbReference type="BRENDA" id="4.2.3.113">
    <property type="organism ID" value="8974"/>
</dbReference>
<dbReference type="SABIO-RK" id="F1CKI8"/>
<dbReference type="UniPathway" id="UPA00924"/>
<dbReference type="GO" id="GO:0009507">
    <property type="term" value="C:chloroplast"/>
    <property type="evidence" value="ECO:0007669"/>
    <property type="project" value="UniProtKB-SubCell"/>
</dbReference>
<dbReference type="GO" id="GO:0016829">
    <property type="term" value="F:lyase activity"/>
    <property type="evidence" value="ECO:0000314"/>
    <property type="project" value="UniProtKB"/>
</dbReference>
<dbReference type="GO" id="GO:0000287">
    <property type="term" value="F:magnesium ion binding"/>
    <property type="evidence" value="ECO:0007669"/>
    <property type="project" value="InterPro"/>
</dbReference>
<dbReference type="GO" id="GO:0010333">
    <property type="term" value="F:terpene synthase activity"/>
    <property type="evidence" value="ECO:0000314"/>
    <property type="project" value="UniProtKB"/>
</dbReference>
<dbReference type="GO" id="GO:0016102">
    <property type="term" value="P:diterpenoid biosynthetic process"/>
    <property type="evidence" value="ECO:0007669"/>
    <property type="project" value="InterPro"/>
</dbReference>
<dbReference type="GO" id="GO:0043693">
    <property type="term" value="P:monoterpene biosynthetic process"/>
    <property type="evidence" value="ECO:0000314"/>
    <property type="project" value="UniProtKB"/>
</dbReference>
<dbReference type="CDD" id="cd00684">
    <property type="entry name" value="Terpene_cyclase_plant_C1"/>
    <property type="match status" value="1"/>
</dbReference>
<dbReference type="FunFam" id="1.50.10.130:FF:000004">
    <property type="entry name" value="Carene synthase, chloroplastic"/>
    <property type="match status" value="1"/>
</dbReference>
<dbReference type="FunFam" id="1.10.600.10:FF:000005">
    <property type="entry name" value="Ent-kaur-16-ene synthase, chloroplastic"/>
    <property type="match status" value="1"/>
</dbReference>
<dbReference type="Gene3D" id="1.10.600.10">
    <property type="entry name" value="Farnesyl Diphosphate Synthase"/>
    <property type="match status" value="1"/>
</dbReference>
<dbReference type="Gene3D" id="1.50.10.130">
    <property type="entry name" value="Terpene synthase, N-terminal domain"/>
    <property type="match status" value="1"/>
</dbReference>
<dbReference type="InterPro" id="IPR008949">
    <property type="entry name" value="Isoprenoid_synthase_dom_sf"/>
</dbReference>
<dbReference type="InterPro" id="IPR034741">
    <property type="entry name" value="Terpene_cyclase-like_1_C"/>
</dbReference>
<dbReference type="InterPro" id="IPR044814">
    <property type="entry name" value="Terpene_cyclase_plant_C1"/>
</dbReference>
<dbReference type="InterPro" id="IPR001906">
    <property type="entry name" value="Terpene_synth_N"/>
</dbReference>
<dbReference type="InterPro" id="IPR036965">
    <property type="entry name" value="Terpene_synth_N_sf"/>
</dbReference>
<dbReference type="InterPro" id="IPR050148">
    <property type="entry name" value="Terpene_synthase-like"/>
</dbReference>
<dbReference type="InterPro" id="IPR005630">
    <property type="entry name" value="Terpene_synthase_metal-bd"/>
</dbReference>
<dbReference type="InterPro" id="IPR008930">
    <property type="entry name" value="Terpenoid_cyclase/PrenylTrfase"/>
</dbReference>
<dbReference type="PANTHER" id="PTHR31225">
    <property type="entry name" value="OS04G0344100 PROTEIN-RELATED"/>
    <property type="match status" value="1"/>
</dbReference>
<dbReference type="Pfam" id="PF01397">
    <property type="entry name" value="Terpene_synth"/>
    <property type="match status" value="1"/>
</dbReference>
<dbReference type="Pfam" id="PF03936">
    <property type="entry name" value="Terpene_synth_C"/>
    <property type="match status" value="1"/>
</dbReference>
<dbReference type="SFLD" id="SFLDS00005">
    <property type="entry name" value="Isoprenoid_Synthase_Type_I"/>
    <property type="match status" value="1"/>
</dbReference>
<dbReference type="SFLD" id="SFLDG01019">
    <property type="entry name" value="Terpene_Cyclase_Like_1_C_Termi"/>
    <property type="match status" value="1"/>
</dbReference>
<dbReference type="SFLD" id="SFLDG01014">
    <property type="entry name" value="Terpene_Cyclase_Like_1_N-term"/>
    <property type="match status" value="1"/>
</dbReference>
<dbReference type="SUPFAM" id="SSF48239">
    <property type="entry name" value="Terpenoid cyclases/Protein prenyltransferases"/>
    <property type="match status" value="1"/>
</dbReference>
<dbReference type="SUPFAM" id="SSF48576">
    <property type="entry name" value="Terpenoid synthases"/>
    <property type="match status" value="1"/>
</dbReference>
<proteinExistence type="evidence at protein level"/>
<sequence>MSVISIVPLASKSCLYKSLMSSTHELKALCRPIVTLGMCRRGKSVMASMSTGLTTAVSDDGVQRRIGDHHSNLWDDNFIQSLSSPYRASSYGETTNKLIGEVKEIFNSLSMADGGLMSPVDDLLQHLSMVDNVERLGIDRHFQTEIKVSLDYVYSYWSEKGIGSGRDIVCTDLNTTALGFRILRLHGYTVFPDVFEHLKDQMGRIACSANHTERQISSILNLFRASLIAFPGEKVMEEAEIFSATYLKEALQTIPVSSLSQEIQYVLQYRWHSNLPRLEARTYIDILQENTKNQMLDVNTEKVLELAKLEFNIFHSLQQNELKSVSRWWKDSGFPDLNFIRHRHVEFYTLVSGIDMEPKHSTFRLSFVKMCHLITVLDDMYDTFGTIDELRLFTAAVKRWDPSTTQCLPEYMKGVYIVLYETVNEMAKEAQKSQGRDTLNYVRQALEAYIGAYHKEAEWISTGYLPTFDEYFENGKASSGHRIATLQPTFMLDIPFPHHILQEIDFPSKFNDFACSILRLRGDTRCYQADMARGEEASCISCYMKDNPGSTQEDALNHINNMIEETIKKLNRELLKPDNNVPISSKKHAFDISRGLHHFYNYRDGYTVASNETKNLVIKTVLEPVPM</sequence>
<evidence type="ECO:0000250" key="1"/>
<evidence type="ECO:0000255" key="2"/>
<evidence type="ECO:0000269" key="3">
    <source>
    </source>
</evidence>
<evidence type="ECO:0000305" key="4"/>
<keyword id="KW-0150">Chloroplast</keyword>
<keyword id="KW-0456">Lyase</keyword>
<keyword id="KW-0460">Magnesium</keyword>
<keyword id="KW-0464">Manganese</keyword>
<keyword id="KW-0479">Metal-binding</keyword>
<keyword id="KW-0934">Plastid</keyword>
<keyword id="KW-0809">Transit peptide</keyword>
<comment type="function">
    <text evidence="3">Terpene synthase (TPS) involved in defensive oleoresin formation in conifers in response to insect attack (e.g. white pine weevil P.strobi) or other injury.</text>
</comment>
<comment type="catalytic activity">
    <reaction evidence="3">
        <text>(2E)-geranyl diphosphate = (+)-car-3-ene + diphosphate</text>
        <dbReference type="Rhea" id="RHEA:32539"/>
        <dbReference type="ChEBI" id="CHEBI:7"/>
        <dbReference type="ChEBI" id="CHEBI:33019"/>
        <dbReference type="ChEBI" id="CHEBI:58057"/>
        <dbReference type="EC" id="4.2.3.107"/>
    </reaction>
</comment>
<comment type="cofactor">
    <cofactor evidence="1">
        <name>Mg(2+)</name>
        <dbReference type="ChEBI" id="CHEBI:18420"/>
    </cofactor>
    <cofactor evidence="1">
        <name>Mn(2+)</name>
        <dbReference type="ChEBI" id="CHEBI:29035"/>
    </cofactor>
    <text evidence="1">Binds 3 Mg(2+) or Mn(2+) ions per subunit.</text>
</comment>
<comment type="biophysicochemical properties">
    <kinetics>
        <KM evidence="3">1.47 uM for geranyl diphosphate</KM>
        <Vmax evidence="3">0.91 pmol/sec/ug enzyme with geranyl diphosphate as substrate</Vmax>
        <text evidence="3">kcat is 0.06 sec(-1) with geranyl diphosphate as substrate.</text>
    </kinetics>
</comment>
<comment type="pathway">
    <text>Terpene metabolism; oleoresin biosynthesis.</text>
</comment>
<comment type="subcellular location">
    <subcellularLocation>
        <location evidence="4">Plastid</location>
        <location evidence="4">Chloroplast</location>
    </subcellularLocation>
</comment>
<comment type="induction">
    <text evidence="3">By jasmonic acid (MeJA).</text>
</comment>
<comment type="miscellaneous">
    <text>Expressed only in resistant trees, not detected in genomic DNA of susceptible trees.</text>
</comment>
<comment type="similarity">
    <text evidence="4">Belongs to the terpene synthase family. Tpsd subfamily.</text>
</comment>